<evidence type="ECO:0000255" key="1">
    <source>
        <dbReference type="HAMAP-Rule" id="MF_00456"/>
    </source>
</evidence>
<proteinExistence type="inferred from homology"/>
<gene>
    <name evidence="1" type="primary">proB</name>
    <name type="ordered locus">RALTA_A2702</name>
</gene>
<organism>
    <name type="scientific">Cupriavidus taiwanensis (strain DSM 17343 / BCRC 17206 / CCUG 44338 / CIP 107171 / LMG 19424 / R1)</name>
    <name type="common">Ralstonia taiwanensis (strain LMG 19424)</name>
    <dbReference type="NCBI Taxonomy" id="977880"/>
    <lineage>
        <taxon>Bacteria</taxon>
        <taxon>Pseudomonadati</taxon>
        <taxon>Pseudomonadota</taxon>
        <taxon>Betaproteobacteria</taxon>
        <taxon>Burkholderiales</taxon>
        <taxon>Burkholderiaceae</taxon>
        <taxon>Cupriavidus</taxon>
    </lineage>
</organism>
<feature type="chain" id="PRO_1000125222" description="Glutamate 5-kinase">
    <location>
        <begin position="1"/>
        <end position="372"/>
    </location>
</feature>
<feature type="domain" description="PUA" evidence="1">
    <location>
        <begin position="280"/>
        <end position="358"/>
    </location>
</feature>
<feature type="binding site" evidence="1">
    <location>
        <position position="14"/>
    </location>
    <ligand>
        <name>ATP</name>
        <dbReference type="ChEBI" id="CHEBI:30616"/>
    </ligand>
</feature>
<feature type="binding site" evidence="1">
    <location>
        <position position="54"/>
    </location>
    <ligand>
        <name>substrate</name>
    </ligand>
</feature>
<feature type="binding site" evidence="1">
    <location>
        <position position="141"/>
    </location>
    <ligand>
        <name>substrate</name>
    </ligand>
</feature>
<feature type="binding site" evidence="1">
    <location>
        <position position="153"/>
    </location>
    <ligand>
        <name>substrate</name>
    </ligand>
</feature>
<feature type="binding site" evidence="1">
    <location>
        <begin position="173"/>
        <end position="174"/>
    </location>
    <ligand>
        <name>ATP</name>
        <dbReference type="ChEBI" id="CHEBI:30616"/>
    </ligand>
</feature>
<sequence length="372" mass="39464">MQSVIAQAKRIVVKVGSSLVTNDGKGLDHDAIARWAAQIARLRVAGKEVVLVSSGAIAEGMQRLGWARRPKEIHELQAAAAVGQMGLAQVYESQFTRYGIRTAQVLLTHADLADRERYLNARSTLLTLLSLGVVPIINENDTVVTDEIKFGDNDTLGALVTNLIEGDALVILTDQRGLYTADPRKDPAAQFVDEALAGTPELEAMAGGAGTSIGRGGMLTKILAAKRAAKSGAHTTIASGREANVLERLAAGEAIGTQLLAPTGRLTARKQWMADHLQLRGRVVIDGGAVEKLTSGGKSLLPIGVVEVQGEFARGEVIACVDAQGKEVARGITNYSSAESRLIARKPSSEIESVLGHLNEPELIHRDNLVLV</sequence>
<accession>B3R897</accession>
<comment type="function">
    <text evidence="1">Catalyzes the transfer of a phosphate group to glutamate to form L-glutamate 5-phosphate.</text>
</comment>
<comment type="catalytic activity">
    <reaction evidence="1">
        <text>L-glutamate + ATP = L-glutamyl 5-phosphate + ADP</text>
        <dbReference type="Rhea" id="RHEA:14877"/>
        <dbReference type="ChEBI" id="CHEBI:29985"/>
        <dbReference type="ChEBI" id="CHEBI:30616"/>
        <dbReference type="ChEBI" id="CHEBI:58274"/>
        <dbReference type="ChEBI" id="CHEBI:456216"/>
        <dbReference type="EC" id="2.7.2.11"/>
    </reaction>
</comment>
<comment type="pathway">
    <text evidence="1">Amino-acid biosynthesis; L-proline biosynthesis; L-glutamate 5-semialdehyde from L-glutamate: step 1/2.</text>
</comment>
<comment type="subcellular location">
    <subcellularLocation>
        <location evidence="1">Cytoplasm</location>
    </subcellularLocation>
</comment>
<comment type="similarity">
    <text evidence="1">Belongs to the glutamate 5-kinase family.</text>
</comment>
<keyword id="KW-0028">Amino-acid biosynthesis</keyword>
<keyword id="KW-0067">ATP-binding</keyword>
<keyword id="KW-0963">Cytoplasm</keyword>
<keyword id="KW-0418">Kinase</keyword>
<keyword id="KW-0547">Nucleotide-binding</keyword>
<keyword id="KW-0641">Proline biosynthesis</keyword>
<keyword id="KW-0808">Transferase</keyword>
<reference key="1">
    <citation type="journal article" date="2008" name="Genome Res.">
        <title>Genome sequence of the beta-rhizobium Cupriavidus taiwanensis and comparative genomics of rhizobia.</title>
        <authorList>
            <person name="Amadou C."/>
            <person name="Pascal G."/>
            <person name="Mangenot S."/>
            <person name="Glew M."/>
            <person name="Bontemps C."/>
            <person name="Capela D."/>
            <person name="Carrere S."/>
            <person name="Cruveiller S."/>
            <person name="Dossat C."/>
            <person name="Lajus A."/>
            <person name="Marchetti M."/>
            <person name="Poinsot V."/>
            <person name="Rouy Z."/>
            <person name="Servin B."/>
            <person name="Saad M."/>
            <person name="Schenowitz C."/>
            <person name="Barbe V."/>
            <person name="Batut J."/>
            <person name="Medigue C."/>
            <person name="Masson-Boivin C."/>
        </authorList>
    </citation>
    <scope>NUCLEOTIDE SEQUENCE [LARGE SCALE GENOMIC DNA]</scope>
    <source>
        <strain>DSM 17343 / BCRC 17206 / CCUG 44338 / CIP 107171 / LMG 19424 / R1</strain>
    </source>
</reference>
<protein>
    <recommendedName>
        <fullName evidence="1">Glutamate 5-kinase</fullName>
        <ecNumber evidence="1">2.7.2.11</ecNumber>
    </recommendedName>
    <alternativeName>
        <fullName evidence="1">Gamma-glutamyl kinase</fullName>
        <shortName evidence="1">GK</shortName>
    </alternativeName>
</protein>
<name>PROB_CUPTR</name>
<dbReference type="EC" id="2.7.2.11" evidence="1"/>
<dbReference type="EMBL" id="CU633749">
    <property type="protein sequence ID" value="CAQ70633.1"/>
    <property type="molecule type" value="Genomic_DNA"/>
</dbReference>
<dbReference type="RefSeq" id="WP_012353929.1">
    <property type="nucleotide sequence ID" value="NC_010528.1"/>
</dbReference>
<dbReference type="SMR" id="B3R897"/>
<dbReference type="GeneID" id="29761520"/>
<dbReference type="KEGG" id="cti:RALTA_A2702"/>
<dbReference type="eggNOG" id="COG0263">
    <property type="taxonomic scope" value="Bacteria"/>
</dbReference>
<dbReference type="HOGENOM" id="CLU_025400_2_0_4"/>
<dbReference type="BioCyc" id="CTAI977880:RALTA_RS13145-MONOMER"/>
<dbReference type="UniPathway" id="UPA00098">
    <property type="reaction ID" value="UER00359"/>
</dbReference>
<dbReference type="Proteomes" id="UP000001692">
    <property type="component" value="Chromosome 1"/>
</dbReference>
<dbReference type="GO" id="GO:0005829">
    <property type="term" value="C:cytosol"/>
    <property type="evidence" value="ECO:0007669"/>
    <property type="project" value="TreeGrafter"/>
</dbReference>
<dbReference type="GO" id="GO:0005524">
    <property type="term" value="F:ATP binding"/>
    <property type="evidence" value="ECO:0007669"/>
    <property type="project" value="UniProtKB-KW"/>
</dbReference>
<dbReference type="GO" id="GO:0004349">
    <property type="term" value="F:glutamate 5-kinase activity"/>
    <property type="evidence" value="ECO:0007669"/>
    <property type="project" value="UniProtKB-UniRule"/>
</dbReference>
<dbReference type="GO" id="GO:0003723">
    <property type="term" value="F:RNA binding"/>
    <property type="evidence" value="ECO:0007669"/>
    <property type="project" value="InterPro"/>
</dbReference>
<dbReference type="GO" id="GO:0055129">
    <property type="term" value="P:L-proline biosynthetic process"/>
    <property type="evidence" value="ECO:0007669"/>
    <property type="project" value="UniProtKB-UniRule"/>
</dbReference>
<dbReference type="CDD" id="cd04242">
    <property type="entry name" value="AAK_G5K_ProB"/>
    <property type="match status" value="1"/>
</dbReference>
<dbReference type="CDD" id="cd21157">
    <property type="entry name" value="PUA_G5K"/>
    <property type="match status" value="1"/>
</dbReference>
<dbReference type="FunFam" id="2.30.130.10:FF:000007">
    <property type="entry name" value="Glutamate 5-kinase"/>
    <property type="match status" value="1"/>
</dbReference>
<dbReference type="FunFam" id="3.40.1160.10:FF:000018">
    <property type="entry name" value="Glutamate 5-kinase"/>
    <property type="match status" value="1"/>
</dbReference>
<dbReference type="Gene3D" id="3.40.1160.10">
    <property type="entry name" value="Acetylglutamate kinase-like"/>
    <property type="match status" value="2"/>
</dbReference>
<dbReference type="Gene3D" id="2.30.130.10">
    <property type="entry name" value="PUA domain"/>
    <property type="match status" value="1"/>
</dbReference>
<dbReference type="HAMAP" id="MF_00456">
    <property type="entry name" value="ProB"/>
    <property type="match status" value="1"/>
</dbReference>
<dbReference type="InterPro" id="IPR036393">
    <property type="entry name" value="AceGlu_kinase-like_sf"/>
</dbReference>
<dbReference type="InterPro" id="IPR001048">
    <property type="entry name" value="Asp/Glu/Uridylate_kinase"/>
</dbReference>
<dbReference type="InterPro" id="IPR041739">
    <property type="entry name" value="G5K_ProB"/>
</dbReference>
<dbReference type="InterPro" id="IPR001057">
    <property type="entry name" value="Glu/AcGlu_kinase"/>
</dbReference>
<dbReference type="InterPro" id="IPR011529">
    <property type="entry name" value="Glu_5kinase"/>
</dbReference>
<dbReference type="InterPro" id="IPR005715">
    <property type="entry name" value="Glu_5kinase/COase_Synthase"/>
</dbReference>
<dbReference type="InterPro" id="IPR019797">
    <property type="entry name" value="Glutamate_5-kinase_CS"/>
</dbReference>
<dbReference type="InterPro" id="IPR002478">
    <property type="entry name" value="PUA"/>
</dbReference>
<dbReference type="InterPro" id="IPR015947">
    <property type="entry name" value="PUA-like_sf"/>
</dbReference>
<dbReference type="InterPro" id="IPR036974">
    <property type="entry name" value="PUA_sf"/>
</dbReference>
<dbReference type="NCBIfam" id="TIGR01027">
    <property type="entry name" value="proB"/>
    <property type="match status" value="1"/>
</dbReference>
<dbReference type="PANTHER" id="PTHR43654">
    <property type="entry name" value="GLUTAMATE 5-KINASE"/>
    <property type="match status" value="1"/>
</dbReference>
<dbReference type="PANTHER" id="PTHR43654:SF1">
    <property type="entry name" value="ISOPENTENYL PHOSPHATE KINASE"/>
    <property type="match status" value="1"/>
</dbReference>
<dbReference type="Pfam" id="PF00696">
    <property type="entry name" value="AA_kinase"/>
    <property type="match status" value="1"/>
</dbReference>
<dbReference type="Pfam" id="PF01472">
    <property type="entry name" value="PUA"/>
    <property type="match status" value="1"/>
</dbReference>
<dbReference type="PIRSF" id="PIRSF000729">
    <property type="entry name" value="GK"/>
    <property type="match status" value="1"/>
</dbReference>
<dbReference type="PRINTS" id="PR00474">
    <property type="entry name" value="GLU5KINASE"/>
</dbReference>
<dbReference type="SMART" id="SM00359">
    <property type="entry name" value="PUA"/>
    <property type="match status" value="1"/>
</dbReference>
<dbReference type="SUPFAM" id="SSF53633">
    <property type="entry name" value="Carbamate kinase-like"/>
    <property type="match status" value="1"/>
</dbReference>
<dbReference type="SUPFAM" id="SSF88697">
    <property type="entry name" value="PUA domain-like"/>
    <property type="match status" value="1"/>
</dbReference>
<dbReference type="PROSITE" id="PS00902">
    <property type="entry name" value="GLUTAMATE_5_KINASE"/>
    <property type="match status" value="1"/>
</dbReference>
<dbReference type="PROSITE" id="PS50890">
    <property type="entry name" value="PUA"/>
    <property type="match status" value="1"/>
</dbReference>